<gene>
    <name type="primary">ZNF616</name>
</gene>
<organism>
    <name type="scientific">Homo sapiens</name>
    <name type="common">Human</name>
    <dbReference type="NCBI Taxonomy" id="9606"/>
    <lineage>
        <taxon>Eukaryota</taxon>
        <taxon>Metazoa</taxon>
        <taxon>Chordata</taxon>
        <taxon>Craniata</taxon>
        <taxon>Vertebrata</taxon>
        <taxon>Euteleostomi</taxon>
        <taxon>Mammalia</taxon>
        <taxon>Eutheria</taxon>
        <taxon>Euarchontoglires</taxon>
        <taxon>Primates</taxon>
        <taxon>Haplorrhini</taxon>
        <taxon>Catarrhini</taxon>
        <taxon>Hominidae</taxon>
        <taxon>Homo</taxon>
    </lineage>
</organism>
<dbReference type="EMBL" id="AK092266">
    <property type="protein sequence ID" value="BAG52513.1"/>
    <property type="molecule type" value="mRNA"/>
</dbReference>
<dbReference type="EMBL" id="BC033199">
    <property type="protein sequence ID" value="AAH33199.1"/>
    <property type="molecule type" value="mRNA"/>
</dbReference>
<dbReference type="EMBL" id="BC125099">
    <property type="protein sequence ID" value="AAI25100.1"/>
    <property type="molecule type" value="mRNA"/>
</dbReference>
<dbReference type="EMBL" id="AL832969">
    <property type="protein sequence ID" value="CAH56353.1"/>
    <property type="molecule type" value="mRNA"/>
</dbReference>
<dbReference type="CCDS" id="CCDS33090.1"/>
<dbReference type="RefSeq" id="NP_848618.2">
    <property type="nucleotide sequence ID" value="NM_178523.4"/>
</dbReference>
<dbReference type="RefSeq" id="XP_047295569.1">
    <property type="nucleotide sequence ID" value="XM_047439613.1"/>
</dbReference>
<dbReference type="RefSeq" id="XP_054178490.1">
    <property type="nucleotide sequence ID" value="XM_054322515.1"/>
</dbReference>
<dbReference type="SMR" id="Q08AN1"/>
<dbReference type="BioGRID" id="124691">
    <property type="interactions" value="20"/>
</dbReference>
<dbReference type="FunCoup" id="Q08AN1">
    <property type="interactions" value="143"/>
</dbReference>
<dbReference type="IntAct" id="Q08AN1">
    <property type="interactions" value="15"/>
</dbReference>
<dbReference type="MINT" id="Q08AN1"/>
<dbReference type="STRING" id="9606.ENSP00000471000"/>
<dbReference type="iPTMnet" id="Q08AN1"/>
<dbReference type="PhosphoSitePlus" id="Q08AN1"/>
<dbReference type="SwissPalm" id="Q08AN1"/>
<dbReference type="BioMuta" id="ZNF616"/>
<dbReference type="DMDM" id="257050983"/>
<dbReference type="jPOST" id="Q08AN1"/>
<dbReference type="MassIVE" id="Q08AN1"/>
<dbReference type="PaxDb" id="9606-ENSP00000471000"/>
<dbReference type="PeptideAtlas" id="Q08AN1"/>
<dbReference type="ProteomicsDB" id="58682"/>
<dbReference type="Pumba" id="Q08AN1"/>
<dbReference type="Antibodypedia" id="76364">
    <property type="antibodies" value="8 antibodies from 4 providers"/>
</dbReference>
<dbReference type="DNASU" id="90317"/>
<dbReference type="Ensembl" id="ENST00000600228.6">
    <property type="protein sequence ID" value="ENSP00000471000.1"/>
    <property type="gene ID" value="ENSG00000204611.7"/>
</dbReference>
<dbReference type="GeneID" id="90317"/>
<dbReference type="KEGG" id="hsa:90317"/>
<dbReference type="MANE-Select" id="ENST00000600228.6">
    <property type="protein sequence ID" value="ENSP00000471000.1"/>
    <property type="RefSeq nucleotide sequence ID" value="NM_178523.5"/>
    <property type="RefSeq protein sequence ID" value="NP_848618.2"/>
</dbReference>
<dbReference type="UCSC" id="uc002pym.4">
    <property type="organism name" value="human"/>
</dbReference>
<dbReference type="AGR" id="HGNC:28062"/>
<dbReference type="CTD" id="90317"/>
<dbReference type="GeneCards" id="ZNF616"/>
<dbReference type="HGNC" id="HGNC:28062">
    <property type="gene designation" value="ZNF616"/>
</dbReference>
<dbReference type="HPA" id="ENSG00000204611">
    <property type="expression patterns" value="Low tissue specificity"/>
</dbReference>
<dbReference type="neXtProt" id="NX_Q08AN1"/>
<dbReference type="OpenTargets" id="ENSG00000204611"/>
<dbReference type="PharmGKB" id="PA134978923"/>
<dbReference type="VEuPathDB" id="HostDB:ENSG00000204611"/>
<dbReference type="eggNOG" id="KOG1721">
    <property type="taxonomic scope" value="Eukaryota"/>
</dbReference>
<dbReference type="GeneTree" id="ENSGT00940000164749"/>
<dbReference type="HOGENOM" id="CLU_002678_17_1_1"/>
<dbReference type="InParanoid" id="Q08AN1"/>
<dbReference type="OMA" id="HQSYDIE"/>
<dbReference type="OrthoDB" id="9411774at2759"/>
<dbReference type="PAN-GO" id="Q08AN1">
    <property type="GO annotations" value="4 GO annotations based on evolutionary models"/>
</dbReference>
<dbReference type="PhylomeDB" id="Q08AN1"/>
<dbReference type="TreeFam" id="TF341892"/>
<dbReference type="PathwayCommons" id="Q08AN1"/>
<dbReference type="Reactome" id="R-HSA-212436">
    <property type="pathway name" value="Generic Transcription Pathway"/>
</dbReference>
<dbReference type="SignaLink" id="Q08AN1"/>
<dbReference type="BioGRID-ORCS" id="90317">
    <property type="hits" value="14 hits in 1182 CRISPR screens"/>
</dbReference>
<dbReference type="GenomeRNAi" id="90317"/>
<dbReference type="Pharos" id="Q08AN1">
    <property type="development level" value="Tdark"/>
</dbReference>
<dbReference type="PRO" id="PR:Q08AN1"/>
<dbReference type="Proteomes" id="UP000005640">
    <property type="component" value="Chromosome 19"/>
</dbReference>
<dbReference type="RNAct" id="Q08AN1">
    <property type="molecule type" value="protein"/>
</dbReference>
<dbReference type="Bgee" id="ENSG00000204611">
    <property type="expression patterns" value="Expressed in sural nerve and 131 other cell types or tissues"/>
</dbReference>
<dbReference type="ExpressionAtlas" id="Q08AN1">
    <property type="expression patterns" value="baseline and differential"/>
</dbReference>
<dbReference type="GO" id="GO:0005634">
    <property type="term" value="C:nucleus"/>
    <property type="evidence" value="ECO:0000318"/>
    <property type="project" value="GO_Central"/>
</dbReference>
<dbReference type="GO" id="GO:0000981">
    <property type="term" value="F:DNA-binding transcription factor activity, RNA polymerase II-specific"/>
    <property type="evidence" value="ECO:0000318"/>
    <property type="project" value="GO_Central"/>
</dbReference>
<dbReference type="GO" id="GO:0000978">
    <property type="term" value="F:RNA polymerase II cis-regulatory region sequence-specific DNA binding"/>
    <property type="evidence" value="ECO:0000318"/>
    <property type="project" value="GO_Central"/>
</dbReference>
<dbReference type="GO" id="GO:0008270">
    <property type="term" value="F:zinc ion binding"/>
    <property type="evidence" value="ECO:0007669"/>
    <property type="project" value="UniProtKB-KW"/>
</dbReference>
<dbReference type="GO" id="GO:0045944">
    <property type="term" value="P:positive regulation of transcription by RNA polymerase II"/>
    <property type="evidence" value="ECO:0007669"/>
    <property type="project" value="UniProtKB-ARBA"/>
</dbReference>
<dbReference type="GO" id="GO:0006357">
    <property type="term" value="P:regulation of transcription by RNA polymerase II"/>
    <property type="evidence" value="ECO:0000318"/>
    <property type="project" value="GO_Central"/>
</dbReference>
<dbReference type="CDD" id="cd07765">
    <property type="entry name" value="KRAB_A-box"/>
    <property type="match status" value="1"/>
</dbReference>
<dbReference type="FunFam" id="3.30.160.60:FF:004137">
    <property type="match status" value="1"/>
</dbReference>
<dbReference type="FunFam" id="3.30.160.60:FF:000744">
    <property type="entry name" value="zinc finger E-box-binding homeobox 1"/>
    <property type="match status" value="1"/>
</dbReference>
<dbReference type="FunFam" id="3.30.160.60:FF:000133">
    <property type="entry name" value="Zinc finger protein 347"/>
    <property type="match status" value="1"/>
</dbReference>
<dbReference type="FunFam" id="3.30.160.60:FF:002402">
    <property type="entry name" value="Zinc finger protein 347"/>
    <property type="match status" value="1"/>
</dbReference>
<dbReference type="FunFam" id="3.30.160.60:FF:002090">
    <property type="entry name" value="Zinc finger protein 473"/>
    <property type="match status" value="2"/>
</dbReference>
<dbReference type="FunFam" id="3.30.160.60:FF:002254">
    <property type="entry name" value="Zinc finger protein 540"/>
    <property type="match status" value="2"/>
</dbReference>
<dbReference type="FunFam" id="3.30.160.60:FF:000878">
    <property type="entry name" value="Zinc finger protein 544"/>
    <property type="match status" value="1"/>
</dbReference>
<dbReference type="FunFam" id="3.30.160.60:FF:001509">
    <property type="entry name" value="Zinc finger protein 616"/>
    <property type="match status" value="2"/>
</dbReference>
<dbReference type="FunFam" id="3.30.160.60:FF:002134">
    <property type="entry name" value="Zinc finger protein 616"/>
    <property type="match status" value="1"/>
</dbReference>
<dbReference type="FunFam" id="3.30.160.60:FF:000454">
    <property type="entry name" value="Zinc finger protein 624"/>
    <property type="match status" value="3"/>
</dbReference>
<dbReference type="FunFam" id="3.30.160.60:FF:000846">
    <property type="entry name" value="Zinc finger protein 624"/>
    <property type="match status" value="2"/>
</dbReference>
<dbReference type="FunFam" id="3.30.160.60:FF:000933">
    <property type="entry name" value="zinc finger protein 771"/>
    <property type="match status" value="1"/>
</dbReference>
<dbReference type="FunFam" id="3.30.160.60:FF:001631">
    <property type="entry name" value="Zinc finger protein 836"/>
    <property type="match status" value="1"/>
</dbReference>
<dbReference type="FunFam" id="3.30.160.60:FF:000229">
    <property type="entry name" value="Zinc finger protein 90 homolog"/>
    <property type="match status" value="1"/>
</dbReference>
<dbReference type="FunFam" id="3.30.160.60:FF:000537">
    <property type="entry name" value="Zinc finger with KRAB and SCAN domains 7"/>
    <property type="match status" value="2"/>
</dbReference>
<dbReference type="Gene3D" id="6.10.140.140">
    <property type="match status" value="1"/>
</dbReference>
<dbReference type="Gene3D" id="3.30.160.60">
    <property type="entry name" value="Classic Zinc Finger"/>
    <property type="match status" value="21"/>
</dbReference>
<dbReference type="InterPro" id="IPR050329">
    <property type="entry name" value="GLI_C2H2-zinc-finger"/>
</dbReference>
<dbReference type="InterPro" id="IPR001909">
    <property type="entry name" value="KRAB"/>
</dbReference>
<dbReference type="InterPro" id="IPR036051">
    <property type="entry name" value="KRAB_dom_sf"/>
</dbReference>
<dbReference type="InterPro" id="IPR036236">
    <property type="entry name" value="Znf_C2H2_sf"/>
</dbReference>
<dbReference type="InterPro" id="IPR013087">
    <property type="entry name" value="Znf_C2H2_type"/>
</dbReference>
<dbReference type="PANTHER" id="PTHR19818:SF158">
    <property type="entry name" value="C2H2-TYPE DOMAIN-CONTAINING PROTEIN-RELATED"/>
    <property type="match status" value="1"/>
</dbReference>
<dbReference type="PANTHER" id="PTHR19818">
    <property type="entry name" value="ZINC FINGER PROTEIN ZIC AND GLI"/>
    <property type="match status" value="1"/>
</dbReference>
<dbReference type="Pfam" id="PF01352">
    <property type="entry name" value="KRAB"/>
    <property type="match status" value="1"/>
</dbReference>
<dbReference type="Pfam" id="PF00096">
    <property type="entry name" value="zf-C2H2"/>
    <property type="match status" value="21"/>
</dbReference>
<dbReference type="SMART" id="SM00349">
    <property type="entry name" value="KRAB"/>
    <property type="match status" value="1"/>
</dbReference>
<dbReference type="SMART" id="SM00355">
    <property type="entry name" value="ZnF_C2H2"/>
    <property type="match status" value="21"/>
</dbReference>
<dbReference type="SUPFAM" id="SSF57667">
    <property type="entry name" value="beta-beta-alpha zinc fingers"/>
    <property type="match status" value="11"/>
</dbReference>
<dbReference type="SUPFAM" id="SSF109640">
    <property type="entry name" value="KRAB domain (Kruppel-associated box)"/>
    <property type="match status" value="1"/>
</dbReference>
<dbReference type="PROSITE" id="PS50805">
    <property type="entry name" value="KRAB"/>
    <property type="match status" value="1"/>
</dbReference>
<dbReference type="PROSITE" id="PS00028">
    <property type="entry name" value="ZINC_FINGER_C2H2_1"/>
    <property type="match status" value="21"/>
</dbReference>
<dbReference type="PROSITE" id="PS50157">
    <property type="entry name" value="ZINC_FINGER_C2H2_2"/>
    <property type="match status" value="21"/>
</dbReference>
<keyword id="KW-0238">DNA-binding</keyword>
<keyword id="KW-0479">Metal-binding</keyword>
<keyword id="KW-0539">Nucleus</keyword>
<keyword id="KW-1267">Proteomics identification</keyword>
<keyword id="KW-1185">Reference proteome</keyword>
<keyword id="KW-0677">Repeat</keyword>
<keyword id="KW-0804">Transcription</keyword>
<keyword id="KW-0805">Transcription regulation</keyword>
<keyword id="KW-0862">Zinc</keyword>
<keyword id="KW-0863">Zinc-finger</keyword>
<sequence>MATQGHLTFKDVAIEFSQEEWKCLEPVQKALYKDVMLENYRNLVFLGISPKCVIKELPPTENSNTGERFQTVALERHQSYDIENLYFREIQKHLHDLEFQWKDGETNDKEVPVPHENNLTGKRDQHSQGDVENNHIENQLTSNFESRLAELQKVQTEGRLYECNETEKTGNNGCLVSPHIREKTYVCNECGKAFKASSSLINHQRIHTTEKPYKCNECGKAFHRASLLTVHKVVHTRGKSYQCDVCGKIFRKNSYFVRHQRSHTGQKPYICNECGKSFSKSSHLAVHQRIHTGEKPYKCNLCGKSFSQRVHLRLHQTVHTGERPFKCNECGKTFKRSSNLTVHQVIHAGKKPYKCDVCGKAFRHRSNLVCHRRIHSGEKQYKCNECGKVFSKRSSLAVHRRIHTVEKPCKCNECGKVFSKRSSLAVHQRIHTGQKTYKCNKCGKVYSKHSHLAVHWRIHTGEKAYKCNECGKVFSIHSRLAAHQRIHTGEKPYKCNECGKVFSQHSRLAVHRRIHTGEKPYKCKECGKVFSDRSAFARHRRIHTGEKPYKCKECGKVFSQCSRLTVHRRIHSGEKPYKCNECGKVYSQYSHLVGHRRVHTGEKPYKCHECGKAFNQGSTLNRHQRIHTGEKPYKCNQCGNSFSQRVHLRLHQTVHTGDRPYKCNECGKTFKRSSNLTAHQIIHAGKKPYKCDECGKVFRHSSHLVSHQRIHTGEKRYKCIECGKAFGRLFSLSKHQRIHSGKKPYKCNECGKSFICRSGLTKHRIRHTGESLTTKLNVTRP</sequence>
<protein>
    <recommendedName>
        <fullName>Zinc finger protein 616</fullName>
    </recommendedName>
</protein>
<reference key="1">
    <citation type="journal article" date="2004" name="Nat. Genet.">
        <title>Complete sequencing and characterization of 21,243 full-length human cDNAs.</title>
        <authorList>
            <person name="Ota T."/>
            <person name="Suzuki Y."/>
            <person name="Nishikawa T."/>
            <person name="Otsuki T."/>
            <person name="Sugiyama T."/>
            <person name="Irie R."/>
            <person name="Wakamatsu A."/>
            <person name="Hayashi K."/>
            <person name="Sato H."/>
            <person name="Nagai K."/>
            <person name="Kimura K."/>
            <person name="Makita H."/>
            <person name="Sekine M."/>
            <person name="Obayashi M."/>
            <person name="Nishi T."/>
            <person name="Shibahara T."/>
            <person name="Tanaka T."/>
            <person name="Ishii S."/>
            <person name="Yamamoto J."/>
            <person name="Saito K."/>
            <person name="Kawai Y."/>
            <person name="Isono Y."/>
            <person name="Nakamura Y."/>
            <person name="Nagahari K."/>
            <person name="Murakami K."/>
            <person name="Yasuda T."/>
            <person name="Iwayanagi T."/>
            <person name="Wagatsuma M."/>
            <person name="Shiratori A."/>
            <person name="Sudo H."/>
            <person name="Hosoiri T."/>
            <person name="Kaku Y."/>
            <person name="Kodaira H."/>
            <person name="Kondo H."/>
            <person name="Sugawara M."/>
            <person name="Takahashi M."/>
            <person name="Kanda K."/>
            <person name="Yokoi T."/>
            <person name="Furuya T."/>
            <person name="Kikkawa E."/>
            <person name="Omura Y."/>
            <person name="Abe K."/>
            <person name="Kamihara K."/>
            <person name="Katsuta N."/>
            <person name="Sato K."/>
            <person name="Tanikawa M."/>
            <person name="Yamazaki M."/>
            <person name="Ninomiya K."/>
            <person name="Ishibashi T."/>
            <person name="Yamashita H."/>
            <person name="Murakawa K."/>
            <person name="Fujimori K."/>
            <person name="Tanai H."/>
            <person name="Kimata M."/>
            <person name="Watanabe M."/>
            <person name="Hiraoka S."/>
            <person name="Chiba Y."/>
            <person name="Ishida S."/>
            <person name="Ono Y."/>
            <person name="Takiguchi S."/>
            <person name="Watanabe S."/>
            <person name="Yosida M."/>
            <person name="Hotuta T."/>
            <person name="Kusano J."/>
            <person name="Kanehori K."/>
            <person name="Takahashi-Fujii A."/>
            <person name="Hara H."/>
            <person name="Tanase T.-O."/>
            <person name="Nomura Y."/>
            <person name="Togiya S."/>
            <person name="Komai F."/>
            <person name="Hara R."/>
            <person name="Takeuchi K."/>
            <person name="Arita M."/>
            <person name="Imose N."/>
            <person name="Musashino K."/>
            <person name="Yuuki H."/>
            <person name="Oshima A."/>
            <person name="Sasaki N."/>
            <person name="Aotsuka S."/>
            <person name="Yoshikawa Y."/>
            <person name="Matsunawa H."/>
            <person name="Ichihara T."/>
            <person name="Shiohata N."/>
            <person name="Sano S."/>
            <person name="Moriya S."/>
            <person name="Momiyama H."/>
            <person name="Satoh N."/>
            <person name="Takami S."/>
            <person name="Terashima Y."/>
            <person name="Suzuki O."/>
            <person name="Nakagawa S."/>
            <person name="Senoh A."/>
            <person name="Mizoguchi H."/>
            <person name="Goto Y."/>
            <person name="Shimizu F."/>
            <person name="Wakebe H."/>
            <person name="Hishigaki H."/>
            <person name="Watanabe T."/>
            <person name="Sugiyama A."/>
            <person name="Takemoto M."/>
            <person name="Kawakami B."/>
            <person name="Yamazaki M."/>
            <person name="Watanabe K."/>
            <person name="Kumagai A."/>
            <person name="Itakura S."/>
            <person name="Fukuzumi Y."/>
            <person name="Fujimori Y."/>
            <person name="Komiyama M."/>
            <person name="Tashiro H."/>
            <person name="Tanigami A."/>
            <person name="Fujiwara T."/>
            <person name="Ono T."/>
            <person name="Yamada K."/>
            <person name="Fujii Y."/>
            <person name="Ozaki K."/>
            <person name="Hirao M."/>
            <person name="Ohmori Y."/>
            <person name="Kawabata A."/>
            <person name="Hikiji T."/>
            <person name="Kobatake N."/>
            <person name="Inagaki H."/>
            <person name="Ikema Y."/>
            <person name="Okamoto S."/>
            <person name="Okitani R."/>
            <person name="Kawakami T."/>
            <person name="Noguchi S."/>
            <person name="Itoh T."/>
            <person name="Shigeta K."/>
            <person name="Senba T."/>
            <person name="Matsumura K."/>
            <person name="Nakajima Y."/>
            <person name="Mizuno T."/>
            <person name="Morinaga M."/>
            <person name="Sasaki M."/>
            <person name="Togashi T."/>
            <person name="Oyama M."/>
            <person name="Hata H."/>
            <person name="Watanabe M."/>
            <person name="Komatsu T."/>
            <person name="Mizushima-Sugano J."/>
            <person name="Satoh T."/>
            <person name="Shirai Y."/>
            <person name="Takahashi Y."/>
            <person name="Nakagawa K."/>
            <person name="Okumura K."/>
            <person name="Nagase T."/>
            <person name="Nomura N."/>
            <person name="Kikuchi H."/>
            <person name="Masuho Y."/>
            <person name="Yamashita R."/>
            <person name="Nakai K."/>
            <person name="Yada T."/>
            <person name="Nakamura Y."/>
            <person name="Ohara O."/>
            <person name="Isogai T."/>
            <person name="Sugano S."/>
        </authorList>
    </citation>
    <scope>NUCLEOTIDE SEQUENCE [LARGE SCALE MRNA]</scope>
</reference>
<reference key="2">
    <citation type="journal article" date="2004" name="Genome Res.">
        <title>The status, quality, and expansion of the NIH full-length cDNA project: the Mammalian Gene Collection (MGC).</title>
        <authorList>
            <consortium name="The MGC Project Team"/>
        </authorList>
    </citation>
    <scope>NUCLEOTIDE SEQUENCE [LARGE SCALE MRNA]</scope>
    <scope>VARIANT SER-50</scope>
    <source>
        <tissue>Colon</tissue>
    </source>
</reference>
<reference key="3">
    <citation type="journal article" date="2007" name="BMC Genomics">
        <title>The full-ORF clone resource of the German cDNA consortium.</title>
        <authorList>
            <person name="Bechtel S."/>
            <person name="Rosenfelder H."/>
            <person name="Duda A."/>
            <person name="Schmidt C.P."/>
            <person name="Ernst U."/>
            <person name="Wellenreuther R."/>
            <person name="Mehrle A."/>
            <person name="Schuster C."/>
            <person name="Bahr A."/>
            <person name="Bloecker H."/>
            <person name="Heubner D."/>
            <person name="Hoerlein A."/>
            <person name="Michel G."/>
            <person name="Wedler H."/>
            <person name="Koehrer K."/>
            <person name="Ottenwaelder B."/>
            <person name="Poustka A."/>
            <person name="Wiemann S."/>
            <person name="Schupp I."/>
        </authorList>
    </citation>
    <scope>NUCLEOTIDE SEQUENCE [LARGE SCALE MRNA] OF 457-780</scope>
    <scope>VARIANT SER-50</scope>
    <source>
        <tissue>Stomach</tissue>
    </source>
</reference>
<name>ZN616_HUMAN</name>
<proteinExistence type="evidence at protein level"/>
<feature type="chain" id="PRO_0000280424" description="Zinc finger protein 616">
    <location>
        <begin position="1"/>
        <end position="781"/>
    </location>
</feature>
<feature type="domain" description="KRAB" evidence="2">
    <location>
        <begin position="7"/>
        <end position="84"/>
    </location>
</feature>
<feature type="zinc finger region" description="C2H2-type 1" evidence="1">
    <location>
        <begin position="185"/>
        <end position="207"/>
    </location>
</feature>
<feature type="zinc finger region" description="C2H2-type 2" evidence="1">
    <location>
        <begin position="213"/>
        <end position="235"/>
    </location>
</feature>
<feature type="zinc finger region" description="C2H2-type 3" evidence="1">
    <location>
        <begin position="241"/>
        <end position="263"/>
    </location>
</feature>
<feature type="zinc finger region" description="C2H2-type 4" evidence="1">
    <location>
        <begin position="269"/>
        <end position="291"/>
    </location>
</feature>
<feature type="zinc finger region" description="C2H2-type 5" evidence="1">
    <location>
        <begin position="297"/>
        <end position="319"/>
    </location>
</feature>
<feature type="zinc finger region" description="C2H2-type 6" evidence="1">
    <location>
        <begin position="325"/>
        <end position="347"/>
    </location>
</feature>
<feature type="zinc finger region" description="C2H2-type 7" evidence="1">
    <location>
        <begin position="353"/>
        <end position="375"/>
    </location>
</feature>
<feature type="zinc finger region" description="C2H2-type 8" evidence="1">
    <location>
        <begin position="381"/>
        <end position="403"/>
    </location>
</feature>
<feature type="zinc finger region" description="C2H2-type 9" evidence="1">
    <location>
        <begin position="409"/>
        <end position="431"/>
    </location>
</feature>
<feature type="zinc finger region" description="C2H2-type 10" evidence="1">
    <location>
        <begin position="437"/>
        <end position="459"/>
    </location>
</feature>
<feature type="zinc finger region" description="C2H2-type 11" evidence="1">
    <location>
        <begin position="465"/>
        <end position="487"/>
    </location>
</feature>
<feature type="zinc finger region" description="C2H2-type 12" evidence="1">
    <location>
        <begin position="493"/>
        <end position="515"/>
    </location>
</feature>
<feature type="zinc finger region" description="C2H2-type 13" evidence="1">
    <location>
        <begin position="521"/>
        <end position="543"/>
    </location>
</feature>
<feature type="zinc finger region" description="C2H2-type 14" evidence="1">
    <location>
        <begin position="549"/>
        <end position="571"/>
    </location>
</feature>
<feature type="zinc finger region" description="C2H2-type 15" evidence="1">
    <location>
        <begin position="577"/>
        <end position="599"/>
    </location>
</feature>
<feature type="zinc finger region" description="C2H2-type 16" evidence="1">
    <location>
        <begin position="605"/>
        <end position="627"/>
    </location>
</feature>
<feature type="zinc finger region" description="C2H2-type 17" evidence="1">
    <location>
        <begin position="633"/>
        <end position="655"/>
    </location>
</feature>
<feature type="zinc finger region" description="C2H2-type 18" evidence="1">
    <location>
        <begin position="661"/>
        <end position="683"/>
    </location>
</feature>
<feature type="zinc finger region" description="C2H2-type 19" evidence="1">
    <location>
        <begin position="689"/>
        <end position="711"/>
    </location>
</feature>
<feature type="zinc finger region" description="C2H2-type 20" evidence="1">
    <location>
        <begin position="717"/>
        <end position="739"/>
    </location>
</feature>
<feature type="zinc finger region" description="C2H2-type 21" evidence="1">
    <location>
        <begin position="745"/>
        <end position="767"/>
    </location>
</feature>
<feature type="region of interest" description="Disordered" evidence="3">
    <location>
        <begin position="105"/>
        <end position="129"/>
    </location>
</feature>
<feature type="sequence variant" id="VAR_061960" description="In dbSNP:rs35582075." evidence="4 5">
    <original>P</original>
    <variation>S</variation>
    <location>
        <position position="50"/>
    </location>
</feature>
<feature type="sequence variant" id="VAR_031149" description="In dbSNP:rs3764537.">
    <original>H</original>
    <variation>R</variation>
    <location>
        <position position="451"/>
    </location>
</feature>
<comment type="function">
    <text>May be involved in transcriptional regulation.</text>
</comment>
<comment type="subcellular location">
    <subcellularLocation>
        <location evidence="6">Nucleus</location>
    </subcellularLocation>
</comment>
<comment type="similarity">
    <text evidence="6">Belongs to the krueppel C2H2-type zinc-finger protein family.</text>
</comment>
<evidence type="ECO:0000255" key="1">
    <source>
        <dbReference type="PROSITE-ProRule" id="PRU00042"/>
    </source>
</evidence>
<evidence type="ECO:0000255" key="2">
    <source>
        <dbReference type="PROSITE-ProRule" id="PRU00119"/>
    </source>
</evidence>
<evidence type="ECO:0000256" key="3">
    <source>
        <dbReference type="SAM" id="MobiDB-lite"/>
    </source>
</evidence>
<evidence type="ECO:0000269" key="4">
    <source>
    </source>
</evidence>
<evidence type="ECO:0000269" key="5">
    <source>
    </source>
</evidence>
<evidence type="ECO:0000305" key="6"/>
<accession>Q08AN1</accession>
<accession>B3KRV1</accession>
<accession>Q0P658</accession>
<accession>Q658V7</accession>